<proteinExistence type="inferred from homology"/>
<comment type="function">
    <text evidence="1">NDH-1 shuttles electrons from NADH, via FMN and iron-sulfur (Fe-S) centers, to quinones in the respiratory chain. The immediate electron acceptor for the enzyme in this species is believed to be ubiquinone. Couples the redox reaction to proton translocation (for every two electrons transferred, four hydrogen ions are translocated across the cytoplasmic membrane), and thus conserves the redox energy in a proton gradient.</text>
</comment>
<comment type="catalytic activity">
    <reaction evidence="1">
        <text>a quinone + NADH + 5 H(+)(in) = a quinol + NAD(+) + 4 H(+)(out)</text>
        <dbReference type="Rhea" id="RHEA:57888"/>
        <dbReference type="ChEBI" id="CHEBI:15378"/>
        <dbReference type="ChEBI" id="CHEBI:24646"/>
        <dbReference type="ChEBI" id="CHEBI:57540"/>
        <dbReference type="ChEBI" id="CHEBI:57945"/>
        <dbReference type="ChEBI" id="CHEBI:132124"/>
    </reaction>
</comment>
<comment type="cofactor">
    <cofactor evidence="1">
        <name>[4Fe-4S] cluster</name>
        <dbReference type="ChEBI" id="CHEBI:49883"/>
    </cofactor>
    <text evidence="1">Binds 1 [4Fe-4S] cluster.</text>
</comment>
<comment type="subunit">
    <text evidence="1">NDH-1 is composed of 14 different subunits. Subunits NuoB, C, D, E, F, and G constitute the peripheral sector of the complex.</text>
</comment>
<comment type="subcellular location">
    <subcellularLocation>
        <location evidence="1">Cell inner membrane</location>
        <topology evidence="1">Peripheral membrane protein</topology>
        <orientation evidence="1">Cytoplasmic side</orientation>
    </subcellularLocation>
</comment>
<comment type="similarity">
    <text evidence="1">Belongs to the complex I 20 kDa subunit family.</text>
</comment>
<reference key="1">
    <citation type="submission" date="2006-11" db="EMBL/GenBank/DDBJ databases">
        <title>Sequence of Campylobacter fetus subsp. fetus 82-40.</title>
        <authorList>
            <person name="Fouts D.E."/>
            <person name="Nelson K.E."/>
        </authorList>
    </citation>
    <scope>NUCLEOTIDE SEQUENCE [LARGE SCALE GENOMIC DNA]</scope>
    <source>
        <strain>82-40</strain>
    </source>
</reference>
<gene>
    <name evidence="1" type="primary">nuoB</name>
    <name type="ordered locus">CFF8240_0158</name>
</gene>
<sequence length="168" mass="18700">MGIENLVQNDVVLTRLDALFNWGRKNSLWPMIFGTACCAIEFMSAVSSKHDLSRFGAEVMRFSPRQADLMIIAGTISFKQAPILKEIYDQMCEPKWVVSMGACACSGGFYDNYTTLQGIDQIIPVDVYISGCPPRPEAIIDAILAIQDKISNESIKDRHKDYKGLLDA</sequence>
<evidence type="ECO:0000255" key="1">
    <source>
        <dbReference type="HAMAP-Rule" id="MF_01356"/>
    </source>
</evidence>
<dbReference type="EC" id="7.1.1.-" evidence="1"/>
<dbReference type="EMBL" id="CP000487">
    <property type="protein sequence ID" value="ABK82478.1"/>
    <property type="molecule type" value="Genomic_DNA"/>
</dbReference>
<dbReference type="RefSeq" id="WP_002848153.1">
    <property type="nucleotide sequence ID" value="NC_008599.1"/>
</dbReference>
<dbReference type="SMR" id="A0RMD0"/>
<dbReference type="KEGG" id="cff:CFF8240_0158"/>
<dbReference type="eggNOG" id="COG0377">
    <property type="taxonomic scope" value="Bacteria"/>
</dbReference>
<dbReference type="HOGENOM" id="CLU_055737_7_3_7"/>
<dbReference type="Proteomes" id="UP000000760">
    <property type="component" value="Chromosome"/>
</dbReference>
<dbReference type="GO" id="GO:0005886">
    <property type="term" value="C:plasma membrane"/>
    <property type="evidence" value="ECO:0007669"/>
    <property type="project" value="UniProtKB-SubCell"/>
</dbReference>
<dbReference type="GO" id="GO:0045271">
    <property type="term" value="C:respiratory chain complex I"/>
    <property type="evidence" value="ECO:0007669"/>
    <property type="project" value="TreeGrafter"/>
</dbReference>
<dbReference type="GO" id="GO:0051539">
    <property type="term" value="F:4 iron, 4 sulfur cluster binding"/>
    <property type="evidence" value="ECO:0007669"/>
    <property type="project" value="UniProtKB-KW"/>
</dbReference>
<dbReference type="GO" id="GO:0005506">
    <property type="term" value="F:iron ion binding"/>
    <property type="evidence" value="ECO:0007669"/>
    <property type="project" value="UniProtKB-UniRule"/>
</dbReference>
<dbReference type="GO" id="GO:0008137">
    <property type="term" value="F:NADH dehydrogenase (ubiquinone) activity"/>
    <property type="evidence" value="ECO:0007669"/>
    <property type="project" value="InterPro"/>
</dbReference>
<dbReference type="GO" id="GO:0050136">
    <property type="term" value="F:NADH:ubiquinone reductase (non-electrogenic) activity"/>
    <property type="evidence" value="ECO:0007669"/>
    <property type="project" value="UniProtKB-UniRule"/>
</dbReference>
<dbReference type="GO" id="GO:0048038">
    <property type="term" value="F:quinone binding"/>
    <property type="evidence" value="ECO:0007669"/>
    <property type="project" value="UniProtKB-KW"/>
</dbReference>
<dbReference type="GO" id="GO:0009060">
    <property type="term" value="P:aerobic respiration"/>
    <property type="evidence" value="ECO:0007669"/>
    <property type="project" value="TreeGrafter"/>
</dbReference>
<dbReference type="GO" id="GO:0015990">
    <property type="term" value="P:electron transport coupled proton transport"/>
    <property type="evidence" value="ECO:0007669"/>
    <property type="project" value="TreeGrafter"/>
</dbReference>
<dbReference type="FunFam" id="3.40.50.12280:FF:000002">
    <property type="entry name" value="NADH-quinone oxidoreductase subunit B"/>
    <property type="match status" value="1"/>
</dbReference>
<dbReference type="Gene3D" id="3.40.50.12280">
    <property type="match status" value="1"/>
</dbReference>
<dbReference type="HAMAP" id="MF_01356">
    <property type="entry name" value="NDH1_NuoB"/>
    <property type="match status" value="1"/>
</dbReference>
<dbReference type="InterPro" id="IPR006137">
    <property type="entry name" value="NADH_UbQ_OxRdtase-like_20kDa"/>
</dbReference>
<dbReference type="InterPro" id="IPR006138">
    <property type="entry name" value="NADH_UQ_OxRdtase_20Kd_su"/>
</dbReference>
<dbReference type="NCBIfam" id="TIGR01957">
    <property type="entry name" value="nuoB_fam"/>
    <property type="match status" value="1"/>
</dbReference>
<dbReference type="NCBIfam" id="NF005012">
    <property type="entry name" value="PRK06411.1"/>
    <property type="match status" value="1"/>
</dbReference>
<dbReference type="PANTHER" id="PTHR11995">
    <property type="entry name" value="NADH DEHYDROGENASE"/>
    <property type="match status" value="1"/>
</dbReference>
<dbReference type="PANTHER" id="PTHR11995:SF14">
    <property type="entry name" value="NADH DEHYDROGENASE [UBIQUINONE] IRON-SULFUR PROTEIN 7, MITOCHONDRIAL"/>
    <property type="match status" value="1"/>
</dbReference>
<dbReference type="Pfam" id="PF01058">
    <property type="entry name" value="Oxidored_q6"/>
    <property type="match status" value="1"/>
</dbReference>
<dbReference type="SUPFAM" id="SSF56770">
    <property type="entry name" value="HydA/Nqo6-like"/>
    <property type="match status" value="1"/>
</dbReference>
<accession>A0RMD0</accession>
<keyword id="KW-0004">4Fe-4S</keyword>
<keyword id="KW-0997">Cell inner membrane</keyword>
<keyword id="KW-1003">Cell membrane</keyword>
<keyword id="KW-0408">Iron</keyword>
<keyword id="KW-0411">Iron-sulfur</keyword>
<keyword id="KW-0472">Membrane</keyword>
<keyword id="KW-0479">Metal-binding</keyword>
<keyword id="KW-0520">NAD</keyword>
<keyword id="KW-0874">Quinone</keyword>
<keyword id="KW-1278">Translocase</keyword>
<keyword id="KW-0813">Transport</keyword>
<keyword id="KW-0830">Ubiquinone</keyword>
<feature type="chain" id="PRO_0000376160" description="NADH-quinone oxidoreductase subunit B">
    <location>
        <begin position="1"/>
        <end position="168"/>
    </location>
</feature>
<feature type="binding site" evidence="1">
    <location>
        <position position="37"/>
    </location>
    <ligand>
        <name>[4Fe-4S] cluster</name>
        <dbReference type="ChEBI" id="CHEBI:49883"/>
    </ligand>
</feature>
<feature type="binding site" evidence="1">
    <location>
        <position position="38"/>
    </location>
    <ligand>
        <name>[4Fe-4S] cluster</name>
        <dbReference type="ChEBI" id="CHEBI:49883"/>
    </ligand>
</feature>
<feature type="binding site" evidence="1">
    <location>
        <position position="103"/>
    </location>
    <ligand>
        <name>[4Fe-4S] cluster</name>
        <dbReference type="ChEBI" id="CHEBI:49883"/>
    </ligand>
</feature>
<feature type="binding site" evidence="1">
    <location>
        <position position="132"/>
    </location>
    <ligand>
        <name>[4Fe-4S] cluster</name>
        <dbReference type="ChEBI" id="CHEBI:49883"/>
    </ligand>
</feature>
<organism>
    <name type="scientific">Campylobacter fetus subsp. fetus (strain 82-40)</name>
    <dbReference type="NCBI Taxonomy" id="360106"/>
    <lineage>
        <taxon>Bacteria</taxon>
        <taxon>Pseudomonadati</taxon>
        <taxon>Campylobacterota</taxon>
        <taxon>Epsilonproteobacteria</taxon>
        <taxon>Campylobacterales</taxon>
        <taxon>Campylobacteraceae</taxon>
        <taxon>Campylobacter</taxon>
    </lineage>
</organism>
<protein>
    <recommendedName>
        <fullName evidence="1">NADH-quinone oxidoreductase subunit B</fullName>
        <ecNumber evidence="1">7.1.1.-</ecNumber>
    </recommendedName>
    <alternativeName>
        <fullName evidence="1">NADH dehydrogenase I subunit B</fullName>
    </alternativeName>
    <alternativeName>
        <fullName evidence="1">NDH-1 subunit B</fullName>
    </alternativeName>
</protein>
<name>NUOB_CAMFF</name>